<protein>
    <recommendedName>
        <fullName>Transmembrane protein 179</fullName>
    </recommendedName>
</protein>
<comment type="subcellular location">
    <subcellularLocation>
        <location evidence="2">Membrane</location>
        <topology evidence="2">Multi-pass membrane protein</topology>
    </subcellularLocation>
</comment>
<comment type="similarity">
    <text evidence="2">Belongs to the TMEM179 family.</text>
</comment>
<comment type="sequence caution" evidence="2">
    <conflict type="frameshift">
        <sequence resource="EMBL-CDS" id="BAC41142"/>
    </conflict>
</comment>
<organism>
    <name type="scientific">Mus musculus</name>
    <name type="common">Mouse</name>
    <dbReference type="NCBI Taxonomy" id="10090"/>
    <lineage>
        <taxon>Eukaryota</taxon>
        <taxon>Metazoa</taxon>
        <taxon>Chordata</taxon>
        <taxon>Craniata</taxon>
        <taxon>Vertebrata</taxon>
        <taxon>Euteleostomi</taxon>
        <taxon>Mammalia</taxon>
        <taxon>Eutheria</taxon>
        <taxon>Euarchontoglires</taxon>
        <taxon>Glires</taxon>
        <taxon>Rodentia</taxon>
        <taxon>Myomorpha</taxon>
        <taxon>Muroidea</taxon>
        <taxon>Muridae</taxon>
        <taxon>Murinae</taxon>
        <taxon>Mus</taxon>
        <taxon>Mus</taxon>
    </lineage>
</organism>
<dbReference type="EMBL" id="AK044254">
    <property type="protein sequence ID" value="BAC31841.1"/>
    <property type="molecule type" value="mRNA"/>
</dbReference>
<dbReference type="EMBL" id="AK049973">
    <property type="protein sequence ID" value="BAC34012.1"/>
    <property type="molecule type" value="mRNA"/>
</dbReference>
<dbReference type="EMBL" id="AK090230">
    <property type="protein sequence ID" value="BAC41142.1"/>
    <property type="status" value="ALT_FRAME"/>
    <property type="molecule type" value="mRNA"/>
</dbReference>
<dbReference type="EMBL" id="BC046482">
    <property type="protein sequence ID" value="AAH46482.3"/>
    <property type="molecule type" value="mRNA"/>
</dbReference>
<dbReference type="EMBL" id="BC055014">
    <property type="protein sequence ID" value="AAH55014.2"/>
    <property type="molecule type" value="mRNA"/>
</dbReference>
<dbReference type="CCDS" id="CCDS36570.1"/>
<dbReference type="RefSeq" id="NP_849246.2">
    <property type="nucleotide sequence ID" value="NM_178915.3"/>
</dbReference>
<dbReference type="BioGRID" id="222726">
    <property type="interactions" value="1"/>
</dbReference>
<dbReference type="FunCoup" id="Q8BHH9">
    <property type="interactions" value="25"/>
</dbReference>
<dbReference type="STRING" id="10090.ENSMUSP00000068004"/>
<dbReference type="GlyCosmos" id="Q8BHH9">
    <property type="glycosylation" value="1 site, No reported glycans"/>
</dbReference>
<dbReference type="GlyGen" id="Q8BHH9">
    <property type="glycosylation" value="1 site"/>
</dbReference>
<dbReference type="iPTMnet" id="Q8BHH9"/>
<dbReference type="PhosphoSitePlus" id="Q8BHH9"/>
<dbReference type="PaxDb" id="10090-ENSMUSP00000068004"/>
<dbReference type="ProteomicsDB" id="254526"/>
<dbReference type="Antibodypedia" id="62288">
    <property type="antibodies" value="3 antibodies from 3 providers"/>
</dbReference>
<dbReference type="DNASU" id="104885"/>
<dbReference type="Ensembl" id="ENSMUST00000066791.7">
    <property type="protein sequence ID" value="ENSMUSP00000068004.6"/>
    <property type="gene ID" value="ENSMUSG00000054013.7"/>
</dbReference>
<dbReference type="GeneID" id="104885"/>
<dbReference type="KEGG" id="mmu:104885"/>
<dbReference type="UCSC" id="uc007per.1">
    <property type="organism name" value="mouse"/>
</dbReference>
<dbReference type="AGR" id="MGI:2144891"/>
<dbReference type="CTD" id="388021"/>
<dbReference type="MGI" id="MGI:2144891">
    <property type="gene designation" value="Tmem179"/>
</dbReference>
<dbReference type="VEuPathDB" id="HostDB:ENSMUSG00000054013"/>
<dbReference type="eggNOG" id="ENOG502QW4U">
    <property type="taxonomic scope" value="Eukaryota"/>
</dbReference>
<dbReference type="GeneTree" id="ENSGT00510000048283"/>
<dbReference type="HOGENOM" id="CLU_103794_0_0_1"/>
<dbReference type="InParanoid" id="Q8BHH9"/>
<dbReference type="OMA" id="DEFRGHC"/>
<dbReference type="OrthoDB" id="6423876at2759"/>
<dbReference type="PhylomeDB" id="Q8BHH9"/>
<dbReference type="TreeFam" id="TF324841"/>
<dbReference type="BioGRID-ORCS" id="104885">
    <property type="hits" value="6 hits in 77 CRISPR screens"/>
</dbReference>
<dbReference type="ChiTaRS" id="Tmem179">
    <property type="organism name" value="mouse"/>
</dbReference>
<dbReference type="PRO" id="PR:Q8BHH9"/>
<dbReference type="Proteomes" id="UP000000589">
    <property type="component" value="Chromosome 12"/>
</dbReference>
<dbReference type="RNAct" id="Q8BHH9">
    <property type="molecule type" value="protein"/>
</dbReference>
<dbReference type="Bgee" id="ENSMUSG00000054013">
    <property type="expression patterns" value="Expressed in dorsomedial nucleus of hypothalamus and 113 other cell types or tissues"/>
</dbReference>
<dbReference type="ExpressionAtlas" id="Q8BHH9">
    <property type="expression patterns" value="baseline and differential"/>
</dbReference>
<dbReference type="GO" id="GO:0016020">
    <property type="term" value="C:membrane"/>
    <property type="evidence" value="ECO:0007669"/>
    <property type="project" value="UniProtKB-SubCell"/>
</dbReference>
<dbReference type="InterPro" id="IPR029673">
    <property type="entry name" value="TMEM179"/>
</dbReference>
<dbReference type="PANTHER" id="PTHR31872">
    <property type="entry name" value="TRANSMEMBRANE PROTEIN 179"/>
    <property type="match status" value="1"/>
</dbReference>
<dbReference type="PANTHER" id="PTHR31872:SF4">
    <property type="entry name" value="TRANSMEMBRANE PROTEIN 179"/>
    <property type="match status" value="1"/>
</dbReference>
<keyword id="KW-0325">Glycoprotein</keyword>
<keyword id="KW-0472">Membrane</keyword>
<keyword id="KW-1185">Reference proteome</keyword>
<keyword id="KW-0812">Transmembrane</keyword>
<keyword id="KW-1133">Transmembrane helix</keyword>
<evidence type="ECO:0000255" key="1"/>
<evidence type="ECO:0000305" key="2"/>
<feature type="chain" id="PRO_0000254553" description="Transmembrane protein 179">
    <location>
        <begin position="1"/>
        <end position="233"/>
    </location>
</feature>
<feature type="transmembrane region" description="Helical" evidence="1">
    <location>
        <begin position="6"/>
        <end position="26"/>
    </location>
</feature>
<feature type="transmembrane region" description="Helical" evidence="1">
    <location>
        <begin position="75"/>
        <end position="95"/>
    </location>
</feature>
<feature type="transmembrane region" description="Helical" evidence="1">
    <location>
        <begin position="104"/>
        <end position="124"/>
    </location>
</feature>
<feature type="transmembrane region" description="Helical" evidence="1">
    <location>
        <begin position="170"/>
        <end position="190"/>
    </location>
</feature>
<feature type="glycosylation site" description="N-linked (GlcNAc...) asparagine" evidence="1">
    <location>
        <position position="51"/>
    </location>
</feature>
<feature type="sequence conflict" description="In Ref. 1; BAC41142." evidence="2" ref="1">
    <original>L</original>
    <variation>P</variation>
    <location>
        <position position="185"/>
    </location>
</feature>
<feature type="sequence conflict" description="In Ref. 1; BAC41142." evidence="2" ref="1">
    <original>Q</original>
    <variation>E</variation>
    <location>
        <position position="226"/>
    </location>
</feature>
<sequence length="233" mass="26463">MALNNFLFAQCVCYFLAFLFSFVVVVPLSENGHDFRGRCLLFTEGMWLSANLTMQGRERFTVQEWGPPAACRFSLLASLLSLLLAAAHAWRTLFFLCKGHEGSFFYAFLNLLVSAFVVFLVFIASTIVSVGFTMWCDTITEKGSTPHSCEEFQETDLELNVDNSAFYHQFAIAQFGLWASWLAWLAITTLAFLKVYHNYRQEDLLDSLVHEKELLLARPTSRTSFQGEKSAVI</sequence>
<reference key="1">
    <citation type="journal article" date="2005" name="Science">
        <title>The transcriptional landscape of the mammalian genome.</title>
        <authorList>
            <person name="Carninci P."/>
            <person name="Kasukawa T."/>
            <person name="Katayama S."/>
            <person name="Gough J."/>
            <person name="Frith M.C."/>
            <person name="Maeda N."/>
            <person name="Oyama R."/>
            <person name="Ravasi T."/>
            <person name="Lenhard B."/>
            <person name="Wells C."/>
            <person name="Kodzius R."/>
            <person name="Shimokawa K."/>
            <person name="Bajic V.B."/>
            <person name="Brenner S.E."/>
            <person name="Batalov S."/>
            <person name="Forrest A.R."/>
            <person name="Zavolan M."/>
            <person name="Davis M.J."/>
            <person name="Wilming L.G."/>
            <person name="Aidinis V."/>
            <person name="Allen J.E."/>
            <person name="Ambesi-Impiombato A."/>
            <person name="Apweiler R."/>
            <person name="Aturaliya R.N."/>
            <person name="Bailey T.L."/>
            <person name="Bansal M."/>
            <person name="Baxter L."/>
            <person name="Beisel K.W."/>
            <person name="Bersano T."/>
            <person name="Bono H."/>
            <person name="Chalk A.M."/>
            <person name="Chiu K.P."/>
            <person name="Choudhary V."/>
            <person name="Christoffels A."/>
            <person name="Clutterbuck D.R."/>
            <person name="Crowe M.L."/>
            <person name="Dalla E."/>
            <person name="Dalrymple B.P."/>
            <person name="de Bono B."/>
            <person name="Della Gatta G."/>
            <person name="di Bernardo D."/>
            <person name="Down T."/>
            <person name="Engstrom P."/>
            <person name="Fagiolini M."/>
            <person name="Faulkner G."/>
            <person name="Fletcher C.F."/>
            <person name="Fukushima T."/>
            <person name="Furuno M."/>
            <person name="Futaki S."/>
            <person name="Gariboldi M."/>
            <person name="Georgii-Hemming P."/>
            <person name="Gingeras T.R."/>
            <person name="Gojobori T."/>
            <person name="Green R.E."/>
            <person name="Gustincich S."/>
            <person name="Harbers M."/>
            <person name="Hayashi Y."/>
            <person name="Hensch T.K."/>
            <person name="Hirokawa N."/>
            <person name="Hill D."/>
            <person name="Huminiecki L."/>
            <person name="Iacono M."/>
            <person name="Ikeo K."/>
            <person name="Iwama A."/>
            <person name="Ishikawa T."/>
            <person name="Jakt M."/>
            <person name="Kanapin A."/>
            <person name="Katoh M."/>
            <person name="Kawasawa Y."/>
            <person name="Kelso J."/>
            <person name="Kitamura H."/>
            <person name="Kitano H."/>
            <person name="Kollias G."/>
            <person name="Krishnan S.P."/>
            <person name="Kruger A."/>
            <person name="Kummerfeld S.K."/>
            <person name="Kurochkin I.V."/>
            <person name="Lareau L.F."/>
            <person name="Lazarevic D."/>
            <person name="Lipovich L."/>
            <person name="Liu J."/>
            <person name="Liuni S."/>
            <person name="McWilliam S."/>
            <person name="Madan Babu M."/>
            <person name="Madera M."/>
            <person name="Marchionni L."/>
            <person name="Matsuda H."/>
            <person name="Matsuzawa S."/>
            <person name="Miki H."/>
            <person name="Mignone F."/>
            <person name="Miyake S."/>
            <person name="Morris K."/>
            <person name="Mottagui-Tabar S."/>
            <person name="Mulder N."/>
            <person name="Nakano N."/>
            <person name="Nakauchi H."/>
            <person name="Ng P."/>
            <person name="Nilsson R."/>
            <person name="Nishiguchi S."/>
            <person name="Nishikawa S."/>
            <person name="Nori F."/>
            <person name="Ohara O."/>
            <person name="Okazaki Y."/>
            <person name="Orlando V."/>
            <person name="Pang K.C."/>
            <person name="Pavan W.J."/>
            <person name="Pavesi G."/>
            <person name="Pesole G."/>
            <person name="Petrovsky N."/>
            <person name="Piazza S."/>
            <person name="Reed J."/>
            <person name="Reid J.F."/>
            <person name="Ring B.Z."/>
            <person name="Ringwald M."/>
            <person name="Rost B."/>
            <person name="Ruan Y."/>
            <person name="Salzberg S.L."/>
            <person name="Sandelin A."/>
            <person name="Schneider C."/>
            <person name="Schoenbach C."/>
            <person name="Sekiguchi K."/>
            <person name="Semple C.A."/>
            <person name="Seno S."/>
            <person name="Sessa L."/>
            <person name="Sheng Y."/>
            <person name="Shibata Y."/>
            <person name="Shimada H."/>
            <person name="Shimada K."/>
            <person name="Silva D."/>
            <person name="Sinclair B."/>
            <person name="Sperling S."/>
            <person name="Stupka E."/>
            <person name="Sugiura K."/>
            <person name="Sultana R."/>
            <person name="Takenaka Y."/>
            <person name="Taki K."/>
            <person name="Tammoja K."/>
            <person name="Tan S.L."/>
            <person name="Tang S."/>
            <person name="Taylor M.S."/>
            <person name="Tegner J."/>
            <person name="Teichmann S.A."/>
            <person name="Ueda H.R."/>
            <person name="van Nimwegen E."/>
            <person name="Verardo R."/>
            <person name="Wei C.L."/>
            <person name="Yagi K."/>
            <person name="Yamanishi H."/>
            <person name="Zabarovsky E."/>
            <person name="Zhu S."/>
            <person name="Zimmer A."/>
            <person name="Hide W."/>
            <person name="Bult C."/>
            <person name="Grimmond S.M."/>
            <person name="Teasdale R.D."/>
            <person name="Liu E.T."/>
            <person name="Brusic V."/>
            <person name="Quackenbush J."/>
            <person name="Wahlestedt C."/>
            <person name="Mattick J.S."/>
            <person name="Hume D.A."/>
            <person name="Kai C."/>
            <person name="Sasaki D."/>
            <person name="Tomaru Y."/>
            <person name="Fukuda S."/>
            <person name="Kanamori-Katayama M."/>
            <person name="Suzuki M."/>
            <person name="Aoki J."/>
            <person name="Arakawa T."/>
            <person name="Iida J."/>
            <person name="Imamura K."/>
            <person name="Itoh M."/>
            <person name="Kato T."/>
            <person name="Kawaji H."/>
            <person name="Kawagashira N."/>
            <person name="Kawashima T."/>
            <person name="Kojima M."/>
            <person name="Kondo S."/>
            <person name="Konno H."/>
            <person name="Nakano K."/>
            <person name="Ninomiya N."/>
            <person name="Nishio T."/>
            <person name="Okada M."/>
            <person name="Plessy C."/>
            <person name="Shibata K."/>
            <person name="Shiraki T."/>
            <person name="Suzuki S."/>
            <person name="Tagami M."/>
            <person name="Waki K."/>
            <person name="Watahiki A."/>
            <person name="Okamura-Oho Y."/>
            <person name="Suzuki H."/>
            <person name="Kawai J."/>
            <person name="Hayashizaki Y."/>
        </authorList>
    </citation>
    <scope>NUCLEOTIDE SEQUENCE [LARGE SCALE MRNA]</scope>
    <source>
        <strain>C57BL/6J</strain>
        <tissue>Brain cortex</tissue>
        <tissue>Hippocampus</tissue>
        <tissue>Retina</tissue>
    </source>
</reference>
<reference key="2">
    <citation type="journal article" date="2004" name="Genome Res.">
        <title>The status, quality, and expansion of the NIH full-length cDNA project: the Mammalian Gene Collection (MGC).</title>
        <authorList>
            <consortium name="The MGC Project Team"/>
        </authorList>
    </citation>
    <scope>NUCLEOTIDE SEQUENCE [LARGE SCALE MRNA]</scope>
    <source>
        <tissue>Eye</tissue>
    </source>
</reference>
<name>T179A_MOUSE</name>
<proteinExistence type="evidence at transcript level"/>
<accession>Q8BHH9</accession>
<accession>Q78GD2</accession>
<accession>Q7TPP8</accession>
<accession>Q8BN09</accession>
<gene>
    <name type="primary">Tmem179</name>
</gene>